<sequence length="142" mass="14875">MAKKVQAYVKLQVAAGMANPSPPVGPALGQQGVNIMEFCKAFNAKTDSIEKGLPIPVVITVYADRSFTFVTKTPPAAVLLKKAAGIKSGSGKPNKDKVGKISRAQLQEIAQTKAADMTGADIEAMTRSIEGTARSMGLVVED</sequence>
<accession>B1LNT5</accession>
<name>RL11_ECOSM</name>
<protein>
    <recommendedName>
        <fullName evidence="1">Large ribosomal subunit protein uL11</fullName>
    </recommendedName>
    <alternativeName>
        <fullName evidence="2">50S ribosomal protein L11</fullName>
    </alternativeName>
</protein>
<proteinExistence type="inferred from homology"/>
<gene>
    <name evidence="1" type="primary">rplK</name>
    <name type="ordered locus">EcSMS35_4431</name>
</gene>
<dbReference type="EMBL" id="CP000970">
    <property type="protein sequence ID" value="ACB16931.1"/>
    <property type="molecule type" value="Genomic_DNA"/>
</dbReference>
<dbReference type="RefSeq" id="WP_001085926.1">
    <property type="nucleotide sequence ID" value="NC_010498.1"/>
</dbReference>
<dbReference type="SMR" id="B1LNT5"/>
<dbReference type="GeneID" id="93777911"/>
<dbReference type="KEGG" id="ecm:EcSMS35_4431"/>
<dbReference type="HOGENOM" id="CLU_074237_2_0_6"/>
<dbReference type="Proteomes" id="UP000007011">
    <property type="component" value="Chromosome"/>
</dbReference>
<dbReference type="GO" id="GO:0022625">
    <property type="term" value="C:cytosolic large ribosomal subunit"/>
    <property type="evidence" value="ECO:0007669"/>
    <property type="project" value="TreeGrafter"/>
</dbReference>
<dbReference type="GO" id="GO:0070180">
    <property type="term" value="F:large ribosomal subunit rRNA binding"/>
    <property type="evidence" value="ECO:0007669"/>
    <property type="project" value="UniProtKB-UniRule"/>
</dbReference>
<dbReference type="GO" id="GO:0003735">
    <property type="term" value="F:structural constituent of ribosome"/>
    <property type="evidence" value="ECO:0007669"/>
    <property type="project" value="InterPro"/>
</dbReference>
<dbReference type="GO" id="GO:0006412">
    <property type="term" value="P:translation"/>
    <property type="evidence" value="ECO:0007669"/>
    <property type="project" value="UniProtKB-UniRule"/>
</dbReference>
<dbReference type="CDD" id="cd00349">
    <property type="entry name" value="Ribosomal_L11"/>
    <property type="match status" value="1"/>
</dbReference>
<dbReference type="FunFam" id="1.10.10.250:FF:000001">
    <property type="entry name" value="50S ribosomal protein L11"/>
    <property type="match status" value="1"/>
</dbReference>
<dbReference type="FunFam" id="3.30.1550.10:FF:000001">
    <property type="entry name" value="50S ribosomal protein L11"/>
    <property type="match status" value="1"/>
</dbReference>
<dbReference type="Gene3D" id="1.10.10.250">
    <property type="entry name" value="Ribosomal protein L11, C-terminal domain"/>
    <property type="match status" value="1"/>
</dbReference>
<dbReference type="Gene3D" id="3.30.1550.10">
    <property type="entry name" value="Ribosomal protein L11/L12, N-terminal domain"/>
    <property type="match status" value="1"/>
</dbReference>
<dbReference type="HAMAP" id="MF_00736">
    <property type="entry name" value="Ribosomal_uL11"/>
    <property type="match status" value="1"/>
</dbReference>
<dbReference type="InterPro" id="IPR000911">
    <property type="entry name" value="Ribosomal_uL11"/>
</dbReference>
<dbReference type="InterPro" id="IPR006519">
    <property type="entry name" value="Ribosomal_uL11_bac-typ"/>
</dbReference>
<dbReference type="InterPro" id="IPR020783">
    <property type="entry name" value="Ribosomal_uL11_C"/>
</dbReference>
<dbReference type="InterPro" id="IPR036769">
    <property type="entry name" value="Ribosomal_uL11_C_sf"/>
</dbReference>
<dbReference type="InterPro" id="IPR020785">
    <property type="entry name" value="Ribosomal_uL11_CS"/>
</dbReference>
<dbReference type="InterPro" id="IPR020784">
    <property type="entry name" value="Ribosomal_uL11_N"/>
</dbReference>
<dbReference type="InterPro" id="IPR036796">
    <property type="entry name" value="Ribosomal_uL11_N_sf"/>
</dbReference>
<dbReference type="NCBIfam" id="TIGR01632">
    <property type="entry name" value="L11_bact"/>
    <property type="match status" value="1"/>
</dbReference>
<dbReference type="PANTHER" id="PTHR11661">
    <property type="entry name" value="60S RIBOSOMAL PROTEIN L12"/>
    <property type="match status" value="1"/>
</dbReference>
<dbReference type="PANTHER" id="PTHR11661:SF1">
    <property type="entry name" value="LARGE RIBOSOMAL SUBUNIT PROTEIN UL11M"/>
    <property type="match status" value="1"/>
</dbReference>
<dbReference type="Pfam" id="PF00298">
    <property type="entry name" value="Ribosomal_L11"/>
    <property type="match status" value="1"/>
</dbReference>
<dbReference type="Pfam" id="PF03946">
    <property type="entry name" value="Ribosomal_L11_N"/>
    <property type="match status" value="1"/>
</dbReference>
<dbReference type="SMART" id="SM00649">
    <property type="entry name" value="RL11"/>
    <property type="match status" value="1"/>
</dbReference>
<dbReference type="SUPFAM" id="SSF54747">
    <property type="entry name" value="Ribosomal L11/L12e N-terminal domain"/>
    <property type="match status" value="1"/>
</dbReference>
<dbReference type="SUPFAM" id="SSF46906">
    <property type="entry name" value="Ribosomal protein L11, C-terminal domain"/>
    <property type="match status" value="1"/>
</dbReference>
<dbReference type="PROSITE" id="PS00359">
    <property type="entry name" value="RIBOSOMAL_L11"/>
    <property type="match status" value="1"/>
</dbReference>
<keyword id="KW-0488">Methylation</keyword>
<keyword id="KW-0687">Ribonucleoprotein</keyword>
<keyword id="KW-0689">Ribosomal protein</keyword>
<keyword id="KW-0694">RNA-binding</keyword>
<keyword id="KW-0699">rRNA-binding</keyword>
<evidence type="ECO:0000255" key="1">
    <source>
        <dbReference type="HAMAP-Rule" id="MF_00736"/>
    </source>
</evidence>
<evidence type="ECO:0000305" key="2"/>
<comment type="function">
    <text evidence="1">Forms part of the ribosomal stalk which helps the ribosome interact with GTP-bound translation factors.</text>
</comment>
<comment type="subunit">
    <text evidence="1">Part of the ribosomal stalk of the 50S ribosomal subunit. Interacts with L10 and the large rRNA to form the base of the stalk. L10 forms an elongated spine to which L12 dimers bind in a sequential fashion forming a multimeric L10(L12)X complex.</text>
</comment>
<comment type="PTM">
    <text evidence="1">One or more lysine residues are methylated.</text>
</comment>
<comment type="similarity">
    <text evidence="1">Belongs to the universal ribosomal protein uL11 family.</text>
</comment>
<organism>
    <name type="scientific">Escherichia coli (strain SMS-3-5 / SECEC)</name>
    <dbReference type="NCBI Taxonomy" id="439855"/>
    <lineage>
        <taxon>Bacteria</taxon>
        <taxon>Pseudomonadati</taxon>
        <taxon>Pseudomonadota</taxon>
        <taxon>Gammaproteobacteria</taxon>
        <taxon>Enterobacterales</taxon>
        <taxon>Enterobacteriaceae</taxon>
        <taxon>Escherichia</taxon>
    </lineage>
</organism>
<feature type="chain" id="PRO_1000195630" description="Large ribosomal subunit protein uL11">
    <location>
        <begin position="1"/>
        <end position="142"/>
    </location>
</feature>
<reference key="1">
    <citation type="journal article" date="2008" name="J. Bacteriol.">
        <title>Insights into the environmental resistance gene pool from the genome sequence of the multidrug-resistant environmental isolate Escherichia coli SMS-3-5.</title>
        <authorList>
            <person name="Fricke W.F."/>
            <person name="Wright M.S."/>
            <person name="Lindell A.H."/>
            <person name="Harkins D.M."/>
            <person name="Baker-Austin C."/>
            <person name="Ravel J."/>
            <person name="Stepanauskas R."/>
        </authorList>
    </citation>
    <scope>NUCLEOTIDE SEQUENCE [LARGE SCALE GENOMIC DNA]</scope>
    <source>
        <strain>SMS-3-5 / SECEC</strain>
    </source>
</reference>